<feature type="chain" id="PRO_1000127640" description="Ribulokinase">
    <location>
        <begin position="1"/>
        <end position="569"/>
    </location>
</feature>
<proteinExistence type="inferred from homology"/>
<keyword id="KW-0054">Arabinose catabolism</keyword>
<keyword id="KW-0067">ATP-binding</keyword>
<keyword id="KW-0119">Carbohydrate metabolism</keyword>
<keyword id="KW-0418">Kinase</keyword>
<keyword id="KW-0547">Nucleotide-binding</keyword>
<keyword id="KW-0808">Transferase</keyword>
<protein>
    <recommendedName>
        <fullName evidence="1">Ribulokinase</fullName>
        <ecNumber evidence="1">2.7.1.16</ecNumber>
    </recommendedName>
</protein>
<comment type="catalytic activity">
    <reaction evidence="1">
        <text>D-ribulose + ATP = D-ribulose 5-phosphate + ADP + H(+)</text>
        <dbReference type="Rhea" id="RHEA:17601"/>
        <dbReference type="ChEBI" id="CHEBI:15378"/>
        <dbReference type="ChEBI" id="CHEBI:17173"/>
        <dbReference type="ChEBI" id="CHEBI:30616"/>
        <dbReference type="ChEBI" id="CHEBI:58121"/>
        <dbReference type="ChEBI" id="CHEBI:456216"/>
        <dbReference type="EC" id="2.7.1.16"/>
    </reaction>
</comment>
<comment type="catalytic activity">
    <reaction evidence="1">
        <text>L-ribulose + ATP = L-ribulose 5-phosphate + ADP + H(+)</text>
        <dbReference type="Rhea" id="RHEA:22072"/>
        <dbReference type="ChEBI" id="CHEBI:15378"/>
        <dbReference type="ChEBI" id="CHEBI:16880"/>
        <dbReference type="ChEBI" id="CHEBI:30616"/>
        <dbReference type="ChEBI" id="CHEBI:58226"/>
        <dbReference type="ChEBI" id="CHEBI:456216"/>
        <dbReference type="EC" id="2.7.1.16"/>
    </reaction>
</comment>
<comment type="pathway">
    <text evidence="1">Carbohydrate degradation; L-arabinose degradation via L-ribulose; D-xylulose 5-phosphate from L-arabinose (bacterial route): step 2/3.</text>
</comment>
<comment type="similarity">
    <text evidence="1">Belongs to the ribulokinase family.</text>
</comment>
<organism>
    <name type="scientific">Salmonella heidelberg (strain SL476)</name>
    <dbReference type="NCBI Taxonomy" id="454169"/>
    <lineage>
        <taxon>Bacteria</taxon>
        <taxon>Pseudomonadati</taxon>
        <taxon>Pseudomonadota</taxon>
        <taxon>Gammaproteobacteria</taxon>
        <taxon>Enterobacterales</taxon>
        <taxon>Enterobacteriaceae</taxon>
        <taxon>Salmonella</taxon>
    </lineage>
</organism>
<reference key="1">
    <citation type="journal article" date="2011" name="J. Bacteriol.">
        <title>Comparative genomics of 28 Salmonella enterica isolates: evidence for CRISPR-mediated adaptive sublineage evolution.</title>
        <authorList>
            <person name="Fricke W.F."/>
            <person name="Mammel M.K."/>
            <person name="McDermott P.F."/>
            <person name="Tartera C."/>
            <person name="White D.G."/>
            <person name="Leclerc J.E."/>
            <person name="Ravel J."/>
            <person name="Cebula T.A."/>
        </authorList>
    </citation>
    <scope>NUCLEOTIDE SEQUENCE [LARGE SCALE GENOMIC DNA]</scope>
    <source>
        <strain>SL476</strain>
    </source>
</reference>
<evidence type="ECO:0000255" key="1">
    <source>
        <dbReference type="HAMAP-Rule" id="MF_00520"/>
    </source>
</evidence>
<sequence length="569" mass="61766">MAIAIGLDFGSDSVRALAVDCATGDEIATSIEWYPRWQEGRYCDGPNNQFRHHPRDYMESMEAALKAVLAQLSAAQRANVVGIGVDSTGSTPAPIDADGNVLALRPEFAENPNAMFVLWKDHTAVEEADEITRLCHKPGKVDYSRYIGGIYSSEWFWAKILHVTRQDSAVAQAAVSWIELCDWVPALLSGTTRPQDIRRGRCSAGHKTLWHESWGGLPPASFFDELDPCINRHLRYPLFSETFTADLPVGTLCAEWAQRLDLPESVVISGGAFDCHMGAVGAGAQPNTLVKVIGTSTCDILIADKQSVGDRAVKGICGQVDGSVVPNFIGLEAGQSAFGDIYAWFSRVLSWPLEQLAAQHPELKPQINASQKQLLPALTDAWAKNPSLDHLPVVLDWFNGRRTPNANQRLKGVITDLNLATDAPALFGGLVASTAFGARAIQECFTDQGIAVNNVMALGGIARKNQVIMQVCCDVLNRPLQIVASDQCCALGAAIFAAVAAKVHADIPAAQQSMASAVERTLRPHPEQAQRFEQLYRRYQQWALSAEQHYLPTAAPAPTTPANQAILTH</sequence>
<gene>
    <name evidence="1" type="primary">araB</name>
    <name type="ordered locus">SeHA_C0109</name>
</gene>
<accession>B4TJ60</accession>
<name>ARAB_SALHS</name>
<dbReference type="EC" id="2.7.1.16" evidence="1"/>
<dbReference type="EMBL" id="CP001120">
    <property type="protein sequence ID" value="ACF68318.1"/>
    <property type="molecule type" value="Genomic_DNA"/>
</dbReference>
<dbReference type="RefSeq" id="WP_000951802.1">
    <property type="nucleotide sequence ID" value="NC_011083.1"/>
</dbReference>
<dbReference type="SMR" id="B4TJ60"/>
<dbReference type="KEGG" id="seh:SeHA_C0109"/>
<dbReference type="HOGENOM" id="CLU_009281_9_1_6"/>
<dbReference type="UniPathway" id="UPA00145">
    <property type="reaction ID" value="UER00566"/>
</dbReference>
<dbReference type="Proteomes" id="UP000001866">
    <property type="component" value="Chromosome"/>
</dbReference>
<dbReference type="GO" id="GO:0005737">
    <property type="term" value="C:cytoplasm"/>
    <property type="evidence" value="ECO:0007669"/>
    <property type="project" value="TreeGrafter"/>
</dbReference>
<dbReference type="GO" id="GO:0005524">
    <property type="term" value="F:ATP binding"/>
    <property type="evidence" value="ECO:0007669"/>
    <property type="project" value="UniProtKB-KW"/>
</dbReference>
<dbReference type="GO" id="GO:0019150">
    <property type="term" value="F:D-ribulokinase activity"/>
    <property type="evidence" value="ECO:0007669"/>
    <property type="project" value="RHEA"/>
</dbReference>
<dbReference type="GO" id="GO:0008741">
    <property type="term" value="F:ribulokinase activity"/>
    <property type="evidence" value="ECO:0007669"/>
    <property type="project" value="UniProtKB-UniRule"/>
</dbReference>
<dbReference type="GO" id="GO:0019569">
    <property type="term" value="P:L-arabinose catabolic process to xylulose 5-phosphate"/>
    <property type="evidence" value="ECO:0007669"/>
    <property type="project" value="UniProtKB-UniRule"/>
</dbReference>
<dbReference type="CDD" id="cd07781">
    <property type="entry name" value="ASKHA_NBD_FGGY_L-RBK"/>
    <property type="match status" value="1"/>
</dbReference>
<dbReference type="Gene3D" id="1.20.58.2240">
    <property type="match status" value="1"/>
</dbReference>
<dbReference type="Gene3D" id="3.30.420.40">
    <property type="match status" value="1"/>
</dbReference>
<dbReference type="HAMAP" id="MF_00520">
    <property type="entry name" value="Ribulokinase"/>
    <property type="match status" value="1"/>
</dbReference>
<dbReference type="InterPro" id="IPR043129">
    <property type="entry name" value="ATPase_NBD"/>
</dbReference>
<dbReference type="InterPro" id="IPR018485">
    <property type="entry name" value="FGGY_C"/>
</dbReference>
<dbReference type="InterPro" id="IPR005929">
    <property type="entry name" value="Ribulokinase"/>
</dbReference>
<dbReference type="NCBIfam" id="TIGR01234">
    <property type="entry name" value="L-ribulokinase"/>
    <property type="match status" value="1"/>
</dbReference>
<dbReference type="NCBIfam" id="NF003154">
    <property type="entry name" value="PRK04123.1"/>
    <property type="match status" value="1"/>
</dbReference>
<dbReference type="PANTHER" id="PTHR43435:SF4">
    <property type="entry name" value="FGGY CARBOHYDRATE KINASE DOMAIN-CONTAINING PROTEIN"/>
    <property type="match status" value="1"/>
</dbReference>
<dbReference type="PANTHER" id="PTHR43435">
    <property type="entry name" value="RIBULOKINASE"/>
    <property type="match status" value="1"/>
</dbReference>
<dbReference type="Pfam" id="PF02782">
    <property type="entry name" value="FGGY_C"/>
    <property type="match status" value="1"/>
</dbReference>
<dbReference type="SUPFAM" id="SSF53067">
    <property type="entry name" value="Actin-like ATPase domain"/>
    <property type="match status" value="2"/>
</dbReference>